<organism>
    <name type="scientific">Bacillus thuringiensis subsp. konkukian (strain 97-27)</name>
    <dbReference type="NCBI Taxonomy" id="281309"/>
    <lineage>
        <taxon>Bacteria</taxon>
        <taxon>Bacillati</taxon>
        <taxon>Bacillota</taxon>
        <taxon>Bacilli</taxon>
        <taxon>Bacillales</taxon>
        <taxon>Bacillaceae</taxon>
        <taxon>Bacillus</taxon>
        <taxon>Bacillus cereus group</taxon>
    </lineage>
</organism>
<accession>Q6HAG7</accession>
<sequence length="148" mass="16356">MKVIFLKDVKGKGKKGEVKNVPDGYANNFLLKQGLAAEATNSSMKTLEAQKRKEEKDAAAELESAKQLKETLEKLTVELKAKSGEGGRLFGSITSKQIVDAMQKSHKIKLDKRKFEMDDAIRALGYTNVTVKLHPQVTATVKVHVSEQ</sequence>
<evidence type="ECO:0000255" key="1">
    <source>
        <dbReference type="HAMAP-Rule" id="MF_00503"/>
    </source>
</evidence>
<evidence type="ECO:0000305" key="2"/>
<keyword id="KW-0687">Ribonucleoprotein</keyword>
<keyword id="KW-0689">Ribosomal protein</keyword>
<keyword id="KW-0694">RNA-binding</keyword>
<keyword id="KW-0699">rRNA-binding</keyword>
<comment type="function">
    <text evidence="1">Binds to the 23S rRNA.</text>
</comment>
<comment type="similarity">
    <text evidence="1">Belongs to the bacterial ribosomal protein bL9 family.</text>
</comment>
<name>RL9_BACHK</name>
<dbReference type="EMBL" id="AE017355">
    <property type="protein sequence ID" value="AAT63407.1"/>
    <property type="molecule type" value="Genomic_DNA"/>
</dbReference>
<dbReference type="RefSeq" id="WP_000864235.1">
    <property type="nucleotide sequence ID" value="NC_005957.1"/>
</dbReference>
<dbReference type="RefSeq" id="YP_039459.1">
    <property type="nucleotide sequence ID" value="NC_005957.1"/>
</dbReference>
<dbReference type="SMR" id="Q6HAG7"/>
<dbReference type="GeneID" id="83639160"/>
<dbReference type="KEGG" id="btk:BT9727_5150"/>
<dbReference type="PATRIC" id="fig|281309.8.peg.5475"/>
<dbReference type="HOGENOM" id="CLU_078938_3_2_9"/>
<dbReference type="Proteomes" id="UP000001301">
    <property type="component" value="Chromosome"/>
</dbReference>
<dbReference type="GO" id="GO:1990904">
    <property type="term" value="C:ribonucleoprotein complex"/>
    <property type="evidence" value="ECO:0007669"/>
    <property type="project" value="UniProtKB-KW"/>
</dbReference>
<dbReference type="GO" id="GO:0005840">
    <property type="term" value="C:ribosome"/>
    <property type="evidence" value="ECO:0007669"/>
    <property type="project" value="UniProtKB-KW"/>
</dbReference>
<dbReference type="GO" id="GO:0019843">
    <property type="term" value="F:rRNA binding"/>
    <property type="evidence" value="ECO:0007669"/>
    <property type="project" value="UniProtKB-UniRule"/>
</dbReference>
<dbReference type="GO" id="GO:0003735">
    <property type="term" value="F:structural constituent of ribosome"/>
    <property type="evidence" value="ECO:0007669"/>
    <property type="project" value="InterPro"/>
</dbReference>
<dbReference type="GO" id="GO:0006412">
    <property type="term" value="P:translation"/>
    <property type="evidence" value="ECO:0007669"/>
    <property type="project" value="UniProtKB-UniRule"/>
</dbReference>
<dbReference type="FunFam" id="3.10.430.100:FF:000002">
    <property type="entry name" value="50S ribosomal protein L9"/>
    <property type="match status" value="1"/>
</dbReference>
<dbReference type="FunFam" id="3.40.5.10:FF:000002">
    <property type="entry name" value="50S ribosomal protein L9"/>
    <property type="match status" value="1"/>
</dbReference>
<dbReference type="Gene3D" id="3.10.430.100">
    <property type="entry name" value="Ribosomal protein L9, C-terminal domain"/>
    <property type="match status" value="1"/>
</dbReference>
<dbReference type="Gene3D" id="3.40.5.10">
    <property type="entry name" value="Ribosomal protein L9, N-terminal domain"/>
    <property type="match status" value="1"/>
</dbReference>
<dbReference type="HAMAP" id="MF_00503">
    <property type="entry name" value="Ribosomal_bL9"/>
    <property type="match status" value="1"/>
</dbReference>
<dbReference type="InterPro" id="IPR000244">
    <property type="entry name" value="Ribosomal_bL9"/>
</dbReference>
<dbReference type="InterPro" id="IPR009027">
    <property type="entry name" value="Ribosomal_bL9/RNase_H1_N"/>
</dbReference>
<dbReference type="InterPro" id="IPR020594">
    <property type="entry name" value="Ribosomal_bL9_bac/chp"/>
</dbReference>
<dbReference type="InterPro" id="IPR020069">
    <property type="entry name" value="Ribosomal_bL9_C"/>
</dbReference>
<dbReference type="InterPro" id="IPR036791">
    <property type="entry name" value="Ribosomal_bL9_C_sf"/>
</dbReference>
<dbReference type="InterPro" id="IPR020070">
    <property type="entry name" value="Ribosomal_bL9_N"/>
</dbReference>
<dbReference type="InterPro" id="IPR036935">
    <property type="entry name" value="Ribosomal_bL9_N_sf"/>
</dbReference>
<dbReference type="NCBIfam" id="TIGR00158">
    <property type="entry name" value="L9"/>
    <property type="match status" value="1"/>
</dbReference>
<dbReference type="PANTHER" id="PTHR21368">
    <property type="entry name" value="50S RIBOSOMAL PROTEIN L9"/>
    <property type="match status" value="1"/>
</dbReference>
<dbReference type="Pfam" id="PF03948">
    <property type="entry name" value="Ribosomal_L9_C"/>
    <property type="match status" value="1"/>
</dbReference>
<dbReference type="Pfam" id="PF01281">
    <property type="entry name" value="Ribosomal_L9_N"/>
    <property type="match status" value="1"/>
</dbReference>
<dbReference type="SUPFAM" id="SSF55658">
    <property type="entry name" value="L9 N-domain-like"/>
    <property type="match status" value="1"/>
</dbReference>
<dbReference type="SUPFAM" id="SSF55653">
    <property type="entry name" value="Ribosomal protein L9 C-domain"/>
    <property type="match status" value="1"/>
</dbReference>
<dbReference type="PROSITE" id="PS00651">
    <property type="entry name" value="RIBOSOMAL_L9"/>
    <property type="match status" value="1"/>
</dbReference>
<protein>
    <recommendedName>
        <fullName evidence="1">Large ribosomal subunit protein bL9</fullName>
    </recommendedName>
    <alternativeName>
        <fullName evidence="2">50S ribosomal protein L9</fullName>
    </alternativeName>
</protein>
<feature type="chain" id="PRO_0000236479" description="Large ribosomal subunit protein bL9">
    <location>
        <begin position="1"/>
        <end position="148"/>
    </location>
</feature>
<gene>
    <name evidence="1" type="primary">rplI</name>
    <name type="ordered locus">BT9727_5150</name>
</gene>
<reference key="1">
    <citation type="journal article" date="2006" name="J. Bacteriol.">
        <title>Pathogenomic sequence analysis of Bacillus cereus and Bacillus thuringiensis isolates closely related to Bacillus anthracis.</title>
        <authorList>
            <person name="Han C.S."/>
            <person name="Xie G."/>
            <person name="Challacombe J.F."/>
            <person name="Altherr M.R."/>
            <person name="Bhotika S.S."/>
            <person name="Bruce D."/>
            <person name="Campbell C.S."/>
            <person name="Campbell M.L."/>
            <person name="Chen J."/>
            <person name="Chertkov O."/>
            <person name="Cleland C."/>
            <person name="Dimitrijevic M."/>
            <person name="Doggett N.A."/>
            <person name="Fawcett J.J."/>
            <person name="Glavina T."/>
            <person name="Goodwin L.A."/>
            <person name="Hill K.K."/>
            <person name="Hitchcock P."/>
            <person name="Jackson P.J."/>
            <person name="Keim P."/>
            <person name="Kewalramani A.R."/>
            <person name="Longmire J."/>
            <person name="Lucas S."/>
            <person name="Malfatti S."/>
            <person name="McMurry K."/>
            <person name="Meincke L.J."/>
            <person name="Misra M."/>
            <person name="Moseman B.L."/>
            <person name="Mundt M."/>
            <person name="Munk A.C."/>
            <person name="Okinaka R.T."/>
            <person name="Parson-Quintana B."/>
            <person name="Reilly L.P."/>
            <person name="Richardson P."/>
            <person name="Robinson D.L."/>
            <person name="Rubin E."/>
            <person name="Saunders E."/>
            <person name="Tapia R."/>
            <person name="Tesmer J.G."/>
            <person name="Thayer N."/>
            <person name="Thompson L.S."/>
            <person name="Tice H."/>
            <person name="Ticknor L.O."/>
            <person name="Wills P.L."/>
            <person name="Brettin T.S."/>
            <person name="Gilna P."/>
        </authorList>
    </citation>
    <scope>NUCLEOTIDE SEQUENCE [LARGE SCALE GENOMIC DNA]</scope>
    <source>
        <strain>97-27</strain>
    </source>
</reference>
<proteinExistence type="inferred from homology"/>